<reference key="1">
    <citation type="journal article" date="1993" name="Mol. Biol. Cell">
        <title>Schizosaccharomyces pombe ypt5: a homologue of the rab5 endosome fusion regulator.</title>
        <authorList>
            <person name="Armstrong J."/>
            <person name="Craighead M.W."/>
            <person name="Watson R."/>
            <person name="Ponnambalam S."/>
            <person name="Bowden S."/>
        </authorList>
    </citation>
    <scope>NUCLEOTIDE SEQUENCE [GENOMIC DNA]</scope>
</reference>
<reference key="2">
    <citation type="journal article" date="2002" name="Nature">
        <title>The genome sequence of Schizosaccharomyces pombe.</title>
        <authorList>
            <person name="Wood V."/>
            <person name="Gwilliam R."/>
            <person name="Rajandream M.A."/>
            <person name="Lyne M.H."/>
            <person name="Lyne R."/>
            <person name="Stewart A."/>
            <person name="Sgouros J.G."/>
            <person name="Peat N."/>
            <person name="Hayles J."/>
            <person name="Baker S.G."/>
            <person name="Basham D."/>
            <person name="Bowman S."/>
            <person name="Brooks K."/>
            <person name="Brown D."/>
            <person name="Brown S."/>
            <person name="Chillingworth T."/>
            <person name="Churcher C.M."/>
            <person name="Collins M."/>
            <person name="Connor R."/>
            <person name="Cronin A."/>
            <person name="Davis P."/>
            <person name="Feltwell T."/>
            <person name="Fraser A."/>
            <person name="Gentles S."/>
            <person name="Goble A."/>
            <person name="Hamlin N."/>
            <person name="Harris D.E."/>
            <person name="Hidalgo J."/>
            <person name="Hodgson G."/>
            <person name="Holroyd S."/>
            <person name="Hornsby T."/>
            <person name="Howarth S."/>
            <person name="Huckle E.J."/>
            <person name="Hunt S."/>
            <person name="Jagels K."/>
            <person name="James K.D."/>
            <person name="Jones L."/>
            <person name="Jones M."/>
            <person name="Leather S."/>
            <person name="McDonald S."/>
            <person name="McLean J."/>
            <person name="Mooney P."/>
            <person name="Moule S."/>
            <person name="Mungall K.L."/>
            <person name="Murphy L.D."/>
            <person name="Niblett D."/>
            <person name="Odell C."/>
            <person name="Oliver K."/>
            <person name="O'Neil S."/>
            <person name="Pearson D."/>
            <person name="Quail M.A."/>
            <person name="Rabbinowitsch E."/>
            <person name="Rutherford K.M."/>
            <person name="Rutter S."/>
            <person name="Saunders D."/>
            <person name="Seeger K."/>
            <person name="Sharp S."/>
            <person name="Skelton J."/>
            <person name="Simmonds M.N."/>
            <person name="Squares R."/>
            <person name="Squares S."/>
            <person name="Stevens K."/>
            <person name="Taylor K."/>
            <person name="Taylor R.G."/>
            <person name="Tivey A."/>
            <person name="Walsh S.V."/>
            <person name="Warren T."/>
            <person name="Whitehead S."/>
            <person name="Woodward J.R."/>
            <person name="Volckaert G."/>
            <person name="Aert R."/>
            <person name="Robben J."/>
            <person name="Grymonprez B."/>
            <person name="Weltjens I."/>
            <person name="Vanstreels E."/>
            <person name="Rieger M."/>
            <person name="Schaefer M."/>
            <person name="Mueller-Auer S."/>
            <person name="Gabel C."/>
            <person name="Fuchs M."/>
            <person name="Duesterhoeft A."/>
            <person name="Fritzc C."/>
            <person name="Holzer E."/>
            <person name="Moestl D."/>
            <person name="Hilbert H."/>
            <person name="Borzym K."/>
            <person name="Langer I."/>
            <person name="Beck A."/>
            <person name="Lehrach H."/>
            <person name="Reinhardt R."/>
            <person name="Pohl T.M."/>
            <person name="Eger P."/>
            <person name="Zimmermann W."/>
            <person name="Wedler H."/>
            <person name="Wambutt R."/>
            <person name="Purnelle B."/>
            <person name="Goffeau A."/>
            <person name="Cadieu E."/>
            <person name="Dreano S."/>
            <person name="Gloux S."/>
            <person name="Lelaure V."/>
            <person name="Mottier S."/>
            <person name="Galibert F."/>
            <person name="Aves S.J."/>
            <person name="Xiang Z."/>
            <person name="Hunt C."/>
            <person name="Moore K."/>
            <person name="Hurst S.M."/>
            <person name="Lucas M."/>
            <person name="Rochet M."/>
            <person name="Gaillardin C."/>
            <person name="Tallada V.A."/>
            <person name="Garzon A."/>
            <person name="Thode G."/>
            <person name="Daga R.R."/>
            <person name="Cruzado L."/>
            <person name="Jimenez J."/>
            <person name="Sanchez M."/>
            <person name="del Rey F."/>
            <person name="Benito J."/>
            <person name="Dominguez A."/>
            <person name="Revuelta J.L."/>
            <person name="Moreno S."/>
            <person name="Armstrong J."/>
            <person name="Forsburg S.L."/>
            <person name="Cerutti L."/>
            <person name="Lowe T."/>
            <person name="McCombie W.R."/>
            <person name="Paulsen I."/>
            <person name="Potashkin J."/>
            <person name="Shpakovski G.V."/>
            <person name="Ussery D."/>
            <person name="Barrell B.G."/>
            <person name="Nurse P."/>
        </authorList>
    </citation>
    <scope>NUCLEOTIDE SEQUENCE [LARGE SCALE GENOMIC DNA]</scope>
    <source>
        <strain>972 / ATCC 24843</strain>
    </source>
</reference>
<reference key="3">
    <citation type="journal article" date="1993" name="J. Biol. Chem.">
        <title>Post-translational processing of Schizosaccharomyces pombe YPT5 protein. In vitro and in vivo analysis of processing mutants.</title>
        <authorList>
            <person name="Giannakouros T."/>
            <person name="Newman C.M."/>
            <person name="Craighead M.W."/>
            <person name="Armstrong J."/>
            <person name="Magee A.I."/>
        </authorList>
    </citation>
    <scope>ISOPRENYLATION AT CYS-209 AND CYS-211</scope>
    <scope>METHYLATION AT CYS-211</scope>
</reference>
<dbReference type="EMBL" id="Z22220">
    <property type="protein sequence ID" value="CAA80223.1"/>
    <property type="molecule type" value="Genomic_DNA"/>
</dbReference>
<dbReference type="EMBL" id="CU329670">
    <property type="protein sequence ID" value="CAB11737.1"/>
    <property type="molecule type" value="Genomic_DNA"/>
</dbReference>
<dbReference type="PIR" id="A47733">
    <property type="entry name" value="A47733"/>
</dbReference>
<dbReference type="PIR" id="S34729">
    <property type="entry name" value="S34729"/>
</dbReference>
<dbReference type="RefSeq" id="NP_593907.1">
    <property type="nucleotide sequence ID" value="NM_001019337.2"/>
</dbReference>
<dbReference type="SMR" id="P36586"/>
<dbReference type="BioGRID" id="278718">
    <property type="interactions" value="1"/>
</dbReference>
<dbReference type="FunCoup" id="P36586">
    <property type="interactions" value="592"/>
</dbReference>
<dbReference type="STRING" id="284812.P36586"/>
<dbReference type="iPTMnet" id="P36586"/>
<dbReference type="PaxDb" id="4896-SPAC6F6.15.1"/>
<dbReference type="EnsemblFungi" id="SPAC6F6.15.1">
    <property type="protein sequence ID" value="SPAC6F6.15.1:pep"/>
    <property type="gene ID" value="SPAC6F6.15"/>
</dbReference>
<dbReference type="PomBase" id="SPAC6F6.15">
    <property type="gene designation" value="ypt5"/>
</dbReference>
<dbReference type="VEuPathDB" id="FungiDB:SPAC6F6.15"/>
<dbReference type="eggNOG" id="KOG0092">
    <property type="taxonomic scope" value="Eukaryota"/>
</dbReference>
<dbReference type="HOGENOM" id="CLU_041217_10_2_1"/>
<dbReference type="InParanoid" id="P36586"/>
<dbReference type="OMA" id="DEEGLMW"/>
<dbReference type="PhylomeDB" id="P36586"/>
<dbReference type="Reactome" id="R-SPO-6798695">
    <property type="pathway name" value="Neutrophil degranulation"/>
</dbReference>
<dbReference type="Reactome" id="R-SPO-8873719">
    <property type="pathway name" value="RAB geranylgeranylation"/>
</dbReference>
<dbReference type="Reactome" id="R-SPO-8876198">
    <property type="pathway name" value="RAB GEFs exchange GTP for GDP on RABs"/>
</dbReference>
<dbReference type="Reactome" id="R-SPO-983231">
    <property type="pathway name" value="Factors involved in megakaryocyte development and platelet production"/>
</dbReference>
<dbReference type="PRO" id="PR:P36586"/>
<dbReference type="Proteomes" id="UP000002485">
    <property type="component" value="Chromosome I"/>
</dbReference>
<dbReference type="GO" id="GO:0005829">
    <property type="term" value="C:cytosol"/>
    <property type="evidence" value="ECO:0007005"/>
    <property type="project" value="PomBase"/>
</dbReference>
<dbReference type="GO" id="GO:0031901">
    <property type="term" value="C:early endosome membrane"/>
    <property type="evidence" value="ECO:0000314"/>
    <property type="project" value="CACAO"/>
</dbReference>
<dbReference type="GO" id="GO:0012505">
    <property type="term" value="C:endomembrane system"/>
    <property type="evidence" value="ECO:0000318"/>
    <property type="project" value="GO_Central"/>
</dbReference>
<dbReference type="GO" id="GO:0005770">
    <property type="term" value="C:late endosome"/>
    <property type="evidence" value="ECO:0000266"/>
    <property type="project" value="PomBase"/>
</dbReference>
<dbReference type="GO" id="GO:0005634">
    <property type="term" value="C:nucleus"/>
    <property type="evidence" value="ECO:0007005"/>
    <property type="project" value="PomBase"/>
</dbReference>
<dbReference type="GO" id="GO:0005886">
    <property type="term" value="C:plasma membrane"/>
    <property type="evidence" value="ECO:0007669"/>
    <property type="project" value="UniProtKB-SubCell"/>
</dbReference>
<dbReference type="GO" id="GO:0005525">
    <property type="term" value="F:GTP binding"/>
    <property type="evidence" value="ECO:0000314"/>
    <property type="project" value="PomBase"/>
</dbReference>
<dbReference type="GO" id="GO:0003924">
    <property type="term" value="F:GTPase activity"/>
    <property type="evidence" value="ECO:0000318"/>
    <property type="project" value="GO_Central"/>
</dbReference>
<dbReference type="GO" id="GO:0006897">
    <property type="term" value="P:endocytosis"/>
    <property type="evidence" value="ECO:0000318"/>
    <property type="project" value="GO_Central"/>
</dbReference>
<dbReference type="GO" id="GO:0034058">
    <property type="term" value="P:endosomal vesicle fusion"/>
    <property type="evidence" value="ECO:0000315"/>
    <property type="project" value="CACAO"/>
</dbReference>
<dbReference type="GO" id="GO:0006886">
    <property type="term" value="P:intracellular protein transport"/>
    <property type="evidence" value="ECO:0000318"/>
    <property type="project" value="GO_Central"/>
</dbReference>
<dbReference type="CDD" id="cd01860">
    <property type="entry name" value="Rab5_related"/>
    <property type="match status" value="1"/>
</dbReference>
<dbReference type="FunFam" id="3.40.50.300:FF:000464">
    <property type="entry name" value="GTP-binding protein ypt5"/>
    <property type="match status" value="1"/>
</dbReference>
<dbReference type="Gene3D" id="3.40.50.300">
    <property type="entry name" value="P-loop containing nucleotide triphosphate hydrolases"/>
    <property type="match status" value="1"/>
</dbReference>
<dbReference type="InterPro" id="IPR027417">
    <property type="entry name" value="P-loop_NTPase"/>
</dbReference>
<dbReference type="InterPro" id="IPR005225">
    <property type="entry name" value="Small_GTP-bd"/>
</dbReference>
<dbReference type="InterPro" id="IPR001806">
    <property type="entry name" value="Small_GTPase"/>
</dbReference>
<dbReference type="NCBIfam" id="TIGR00231">
    <property type="entry name" value="small_GTP"/>
    <property type="match status" value="1"/>
</dbReference>
<dbReference type="PANTHER" id="PTHR47978">
    <property type="match status" value="1"/>
</dbReference>
<dbReference type="Pfam" id="PF00071">
    <property type="entry name" value="Ras"/>
    <property type="match status" value="1"/>
</dbReference>
<dbReference type="PRINTS" id="PR00449">
    <property type="entry name" value="RASTRNSFRMNG"/>
</dbReference>
<dbReference type="SMART" id="SM00175">
    <property type="entry name" value="RAB"/>
    <property type="match status" value="1"/>
</dbReference>
<dbReference type="SMART" id="SM00176">
    <property type="entry name" value="RAN"/>
    <property type="match status" value="1"/>
</dbReference>
<dbReference type="SMART" id="SM00173">
    <property type="entry name" value="RAS"/>
    <property type="match status" value="1"/>
</dbReference>
<dbReference type="SMART" id="SM00174">
    <property type="entry name" value="RHO"/>
    <property type="match status" value="1"/>
</dbReference>
<dbReference type="SUPFAM" id="SSF52540">
    <property type="entry name" value="P-loop containing nucleoside triphosphate hydrolases"/>
    <property type="match status" value="1"/>
</dbReference>
<dbReference type="PROSITE" id="PS51419">
    <property type="entry name" value="RAB"/>
    <property type="match status" value="1"/>
</dbReference>
<organism>
    <name type="scientific">Schizosaccharomyces pombe (strain 972 / ATCC 24843)</name>
    <name type="common">Fission yeast</name>
    <dbReference type="NCBI Taxonomy" id="284812"/>
    <lineage>
        <taxon>Eukaryota</taxon>
        <taxon>Fungi</taxon>
        <taxon>Dikarya</taxon>
        <taxon>Ascomycota</taxon>
        <taxon>Taphrinomycotina</taxon>
        <taxon>Schizosaccharomycetes</taxon>
        <taxon>Schizosaccharomycetales</taxon>
        <taxon>Schizosaccharomycetaceae</taxon>
        <taxon>Schizosaccharomyces</taxon>
    </lineage>
</organism>
<feature type="chain" id="PRO_0000121312" description="GTP-binding protein ypt5">
    <location>
        <begin position="1"/>
        <end position="211"/>
    </location>
</feature>
<feature type="short sequence motif" description="Effector region" evidence="2">
    <location>
        <begin position="43"/>
        <end position="51"/>
    </location>
</feature>
<feature type="binding site" evidence="1">
    <location>
        <begin position="21"/>
        <end position="28"/>
    </location>
    <ligand>
        <name>GTP</name>
        <dbReference type="ChEBI" id="CHEBI:37565"/>
    </ligand>
</feature>
<feature type="binding site" evidence="1">
    <location>
        <begin position="70"/>
        <end position="74"/>
    </location>
    <ligand>
        <name>GTP</name>
        <dbReference type="ChEBI" id="CHEBI:37565"/>
    </ligand>
</feature>
<feature type="binding site" evidence="1">
    <location>
        <begin position="128"/>
        <end position="131"/>
    </location>
    <ligand>
        <name>GTP</name>
        <dbReference type="ChEBI" id="CHEBI:37565"/>
    </ligand>
</feature>
<feature type="modified residue" description="Cysteine methyl ester" evidence="3">
    <location>
        <position position="211"/>
    </location>
</feature>
<feature type="lipid moiety-binding region" description="S-geranylgeranyl cysteine" evidence="3">
    <location>
        <position position="209"/>
    </location>
</feature>
<feature type="lipid moiety-binding region" description="S-geranylgeranyl cysteine" evidence="3">
    <location>
        <position position="211"/>
    </location>
</feature>
<keyword id="KW-1003">Cell membrane</keyword>
<keyword id="KW-0342">GTP-binding</keyword>
<keyword id="KW-0449">Lipoprotein</keyword>
<keyword id="KW-0472">Membrane</keyword>
<keyword id="KW-0488">Methylation</keyword>
<keyword id="KW-0547">Nucleotide-binding</keyword>
<keyword id="KW-0636">Prenylation</keyword>
<keyword id="KW-0653">Protein transport</keyword>
<keyword id="KW-1185">Reference proteome</keyword>
<keyword id="KW-0813">Transport</keyword>
<accession>P36586</accession>
<sequence>MASNTAPKNVVTINQKLVLLGDSAVGKSSLVLRFVKDQFDDYRESTIGAAFLTQTLPIDENTSVKLEIWDTAGQERYKSLAPMYYRNANCAIVVYDITQAASLEKAKSWIKELQRQAPEGIVIALAGNKLDLAQERRAVEKADAEAYAAEANLLFFETSAKTAENVNELFTAIAKKLPLEDKLNQARGAVNRGVNLSEARPAAQPSGSCSC</sequence>
<comment type="function">
    <text evidence="1">Protein transport. Probably involved in vesicular traffic (By similarity).</text>
</comment>
<comment type="subcellular location">
    <subcellularLocation>
        <location evidence="4">Cell membrane</location>
        <topology evidence="4">Lipid-anchor</topology>
        <orientation evidence="4">Cytoplasmic side</orientation>
    </subcellularLocation>
</comment>
<comment type="similarity">
    <text evidence="4">Belongs to the small GTPase superfamily. Rab family.</text>
</comment>
<gene>
    <name type="primary">ypt5</name>
    <name type="ORF">SPAC6F6.15</name>
</gene>
<protein>
    <recommendedName>
        <fullName>GTP-binding protein ypt5</fullName>
    </recommendedName>
</protein>
<evidence type="ECO:0000250" key="1"/>
<evidence type="ECO:0000255" key="2"/>
<evidence type="ECO:0000269" key="3">
    <source>
    </source>
</evidence>
<evidence type="ECO:0000305" key="4"/>
<name>YPT5_SCHPO</name>
<proteinExistence type="evidence at protein level"/>